<proteinExistence type="inferred from homology"/>
<dbReference type="EMBL" id="AY651162">
    <property type="protein sequence ID" value="AAW70075.1"/>
    <property type="molecule type" value="Genomic_DNA"/>
</dbReference>
<dbReference type="GO" id="GO:0005886">
    <property type="term" value="C:plasma membrane"/>
    <property type="evidence" value="ECO:0007669"/>
    <property type="project" value="UniProtKB-SubCell"/>
</dbReference>
<dbReference type="GO" id="GO:0004930">
    <property type="term" value="F:G protein-coupled receptor activity"/>
    <property type="evidence" value="ECO:0000250"/>
    <property type="project" value="UniProtKB"/>
</dbReference>
<dbReference type="GO" id="GO:1990595">
    <property type="term" value="F:mast cell secretagogue receptor activity"/>
    <property type="evidence" value="ECO:0000250"/>
    <property type="project" value="UniProtKB"/>
</dbReference>
<dbReference type="GO" id="GO:0045576">
    <property type="term" value="P:mast cell activation"/>
    <property type="evidence" value="ECO:0000250"/>
    <property type="project" value="UniProtKB"/>
</dbReference>
<dbReference type="GO" id="GO:0043303">
    <property type="term" value="P:mast cell degranulation"/>
    <property type="evidence" value="ECO:0000250"/>
    <property type="project" value="UniProtKB"/>
</dbReference>
<dbReference type="FunFam" id="1.20.1070.10:FF:000140">
    <property type="entry name" value="Mas-related G-protein coupled receptor member X2"/>
    <property type="match status" value="1"/>
</dbReference>
<dbReference type="Gene3D" id="1.20.1070.10">
    <property type="entry name" value="Rhodopsin 7-helix transmembrane proteins"/>
    <property type="match status" value="1"/>
</dbReference>
<dbReference type="InterPro" id="IPR000276">
    <property type="entry name" value="GPCR_Rhodpsn"/>
</dbReference>
<dbReference type="InterPro" id="IPR017452">
    <property type="entry name" value="GPCR_Rhodpsn_7TM"/>
</dbReference>
<dbReference type="InterPro" id="IPR026234">
    <property type="entry name" value="MRGPCRFAMILY"/>
</dbReference>
<dbReference type="PANTHER" id="PTHR11334">
    <property type="entry name" value="MAS-RELATED G-PROTEIN COUPLED RECEPTOR"/>
    <property type="match status" value="1"/>
</dbReference>
<dbReference type="PANTHER" id="PTHR11334:SF29">
    <property type="entry name" value="MAS-RELATED G-PROTEIN COUPLED RECEPTOR MEMBER X2"/>
    <property type="match status" value="1"/>
</dbReference>
<dbReference type="Pfam" id="PF00001">
    <property type="entry name" value="7tm_1"/>
    <property type="match status" value="1"/>
</dbReference>
<dbReference type="PRINTS" id="PR00237">
    <property type="entry name" value="GPCRRHODOPSN"/>
</dbReference>
<dbReference type="PRINTS" id="PR02108">
    <property type="entry name" value="MRGPCRFAMILY"/>
</dbReference>
<dbReference type="SUPFAM" id="SSF81321">
    <property type="entry name" value="Family A G protein-coupled receptor-like"/>
    <property type="match status" value="1"/>
</dbReference>
<dbReference type="PROSITE" id="PS00237">
    <property type="entry name" value="G_PROTEIN_RECEP_F1_1"/>
    <property type="match status" value="1"/>
</dbReference>
<dbReference type="PROSITE" id="PS50262">
    <property type="entry name" value="G_PROTEIN_RECEP_F1_2"/>
    <property type="match status" value="1"/>
</dbReference>
<comment type="function">
    <text evidence="1">Mast cell-specific receptor for basic secretagogues, i.e. cationic amphiphilic drugs, as well as endo- or exogenous peptides, consisting of a basic head group and a hydrophobic core. Recognizes and binds small molecules containing a cyclized tetrahydroisoquinoline (THIQ), such as non-steroidal neuromuscular blocking drugs (NMBDs), including tubocurarine and atracurium. In response to these compounds, mediates pseudo-allergic reactions characterized by histamine release, inflammation and airway contraction.</text>
</comment>
<comment type="subcellular location">
    <subcellularLocation>
        <location evidence="2">Cell membrane</location>
        <topology evidence="2">Multi-pass membrane protein</topology>
    </subcellularLocation>
</comment>
<comment type="similarity">
    <text evidence="3">Belongs to the G-protein coupled receptor 1 family. Mas subfamily.</text>
</comment>
<evidence type="ECO:0000250" key="1">
    <source>
        <dbReference type="UniProtKB" id="Q3KNA1"/>
    </source>
</evidence>
<evidence type="ECO:0000255" key="2"/>
<evidence type="ECO:0000255" key="3">
    <source>
        <dbReference type="PROSITE-ProRule" id="PRU00521"/>
    </source>
</evidence>
<keyword id="KW-1003">Cell membrane</keyword>
<keyword id="KW-0297">G-protein coupled receptor</keyword>
<keyword id="KW-0472">Membrane</keyword>
<keyword id="KW-0675">Receptor</keyword>
<keyword id="KW-0807">Transducer</keyword>
<keyword id="KW-0812">Transmembrane</keyword>
<keyword id="KW-1133">Transmembrane helix</keyword>
<accession>Q4QXU6</accession>
<organism>
    <name type="scientific">Hoolock hoolock</name>
    <name type="common">Western hoolock gibbon</name>
    <name type="synonym">Bunopithecus hoolock</name>
    <dbReference type="NCBI Taxonomy" id="61851"/>
    <lineage>
        <taxon>Eukaryota</taxon>
        <taxon>Metazoa</taxon>
        <taxon>Chordata</taxon>
        <taxon>Craniata</taxon>
        <taxon>Vertebrata</taxon>
        <taxon>Euteleostomi</taxon>
        <taxon>Mammalia</taxon>
        <taxon>Eutheria</taxon>
        <taxon>Euarchontoglires</taxon>
        <taxon>Primates</taxon>
        <taxon>Haplorrhini</taxon>
        <taxon>Catarrhini</taxon>
        <taxon>Hylobatidae</taxon>
        <taxon>Hoolock</taxon>
    </lineage>
</organism>
<name>MRGX2_HOOHO</name>
<reference key="1">
    <citation type="journal article" date="2005" name="Gene">
        <title>Adaptive evolution of MRGX2, a human sensory neuron specific gene involved in nociception.</title>
        <authorList>
            <person name="Yang S."/>
            <person name="Liu Y."/>
            <person name="Lin A.A."/>
            <person name="Cavalli-Sforza L.L."/>
            <person name="Zhao Z."/>
            <person name="Su B."/>
        </authorList>
    </citation>
    <scope>NUCLEOTIDE SEQUENCE [GENOMIC DNA]</scope>
</reference>
<protein>
    <recommendedName>
        <fullName>Mas-related G-protein coupled receptor member X2</fullName>
    </recommendedName>
</protein>
<gene>
    <name type="primary">MRGPRX2</name>
    <name type="synonym">MRGX2</name>
</gene>
<sequence>MDPTTPAWGTESTTMDGNDQSLPLLCDKEALIPVFLILFIALVGLVGNGFVLWLLGFRMSRNAFSVYVLSLAGADFLFLCFQIINCLVYLRDFFCSISINFPSXFTTVMTCAYLAGLSMLSTISTERCLSVLWPIWYRCRRPRHLSAVVCVLLWALSLLLSILEGKFCGFLFSDGDFGWCQIFDFITAAWLIFLFVVLCASSLALLVRILCGSRGLPLTRLYLTILLTVLVFLLCGLPFGIQWFLILGFWNSDVLLCHIHLVSVVLSSLNSSANPIIYFFVGSFRKQWRLQQPILKLAFQRALQDTAEVDHSEGCFPQGTSEMSRSSLV</sequence>
<feature type="chain" id="PRO_0000069773" description="Mas-related G-protein coupled receptor member X2">
    <location>
        <begin position="1"/>
        <end position="329"/>
    </location>
</feature>
<feature type="topological domain" description="Extracellular" evidence="2">
    <location>
        <begin position="1"/>
        <end position="33"/>
    </location>
</feature>
<feature type="transmembrane region" description="Helical; Name=1" evidence="2">
    <location>
        <begin position="34"/>
        <end position="54"/>
    </location>
</feature>
<feature type="topological domain" description="Cytoplasmic" evidence="2">
    <location>
        <begin position="55"/>
        <end position="63"/>
    </location>
</feature>
<feature type="transmembrane region" description="Helical; Name=2" evidence="2">
    <location>
        <begin position="64"/>
        <end position="84"/>
    </location>
</feature>
<feature type="topological domain" description="Extracellular" evidence="2">
    <location>
        <begin position="85"/>
        <end position="96"/>
    </location>
</feature>
<feature type="transmembrane region" description="Helical; Name=3" evidence="2">
    <location>
        <begin position="97"/>
        <end position="117"/>
    </location>
</feature>
<feature type="topological domain" description="Cytoplasmic" evidence="2">
    <location>
        <begin position="118"/>
        <end position="144"/>
    </location>
</feature>
<feature type="transmembrane region" description="Helical; Name=4" evidence="2">
    <location>
        <begin position="145"/>
        <end position="165"/>
    </location>
</feature>
<feature type="topological domain" description="Extracellular" evidence="2">
    <location>
        <begin position="166"/>
        <end position="184"/>
    </location>
</feature>
<feature type="transmembrane region" description="Helical; Name=5" evidence="2">
    <location>
        <begin position="185"/>
        <end position="205"/>
    </location>
</feature>
<feature type="topological domain" description="Cytoplasmic" evidence="2">
    <location>
        <begin position="206"/>
        <end position="228"/>
    </location>
</feature>
<feature type="transmembrane region" description="Helical; Name=6" evidence="2">
    <location>
        <begin position="229"/>
        <end position="249"/>
    </location>
</feature>
<feature type="topological domain" description="Extracellular" evidence="2">
    <location>
        <begin position="250"/>
        <end position="263"/>
    </location>
</feature>
<feature type="transmembrane region" description="Helical; Name=7" evidence="2">
    <location>
        <begin position="264"/>
        <end position="284"/>
    </location>
</feature>
<feature type="topological domain" description="Cytoplasmic" evidence="2">
    <location>
        <begin position="285"/>
        <end position="329"/>
    </location>
</feature>